<sequence length="386" mass="43982">MDILRKVAEIHGTPTYVYFEETLRKRSRLVKEVFEGVNLLPTFAVKANNNPVLLKILREEGFGMDVVTKGELLAAKLAGVPSHTVVWNGNGKSRDQMEHFLREDVRIVNVDSFEEMEIWRELNPEGVEYFIRVNPEVDAKTHPHISTGLKKHKFGIPLEDLDSFMERFRSMNIRGLHVHIGSQITRVEPFVEAFSKVVRASERYGFEEINIGGGWGINYSGEELDLSSYREKVVPDLKRFKRVIVEIGRYIVAPSGYLLLRVVLVKRRHNKAFVVVDGGMNVLIRPALYSAYHRIFVLGKQGKEMRADVVGPLCESGDVIAYDRELPEVEPGDIIAVENAGAYGYTMSNNYNSTTRPAEVLVRENGRISLIRRRETEMDIFKDVVM</sequence>
<evidence type="ECO:0000255" key="1">
    <source>
        <dbReference type="HAMAP-Rule" id="MF_02120"/>
    </source>
</evidence>
<evidence type="ECO:0000269" key="2">
    <source ref="2"/>
</evidence>
<evidence type="ECO:0000305" key="3">
    <source ref="2"/>
</evidence>
<evidence type="ECO:0007829" key="4">
    <source>
        <dbReference type="PDB" id="2YXX"/>
    </source>
</evidence>
<name>DCDA_THEMA</name>
<organism>
    <name type="scientific">Thermotoga maritima (strain ATCC 43589 / DSM 3109 / JCM 10099 / NBRC 100826 / MSB8)</name>
    <dbReference type="NCBI Taxonomy" id="243274"/>
    <lineage>
        <taxon>Bacteria</taxon>
        <taxon>Thermotogati</taxon>
        <taxon>Thermotogota</taxon>
        <taxon>Thermotogae</taxon>
        <taxon>Thermotogales</taxon>
        <taxon>Thermotogaceae</taxon>
        <taxon>Thermotoga</taxon>
    </lineage>
</organism>
<comment type="function">
    <text evidence="1">Specifically catalyzes the decarboxylation of meso-diaminopimelate (meso-DAP) to L-lysine.</text>
</comment>
<comment type="catalytic activity">
    <reaction evidence="1">
        <text>meso-2,6-diaminopimelate + H(+) = L-lysine + CO2</text>
        <dbReference type="Rhea" id="RHEA:15101"/>
        <dbReference type="ChEBI" id="CHEBI:15378"/>
        <dbReference type="ChEBI" id="CHEBI:16526"/>
        <dbReference type="ChEBI" id="CHEBI:32551"/>
        <dbReference type="ChEBI" id="CHEBI:57791"/>
        <dbReference type="EC" id="4.1.1.20"/>
    </reaction>
</comment>
<comment type="cofactor">
    <cofactor evidence="1 2">
        <name>pyridoxal 5'-phosphate</name>
        <dbReference type="ChEBI" id="CHEBI:597326"/>
    </cofactor>
</comment>
<comment type="pathway">
    <text evidence="1">Amino-acid biosynthesis; L-lysine biosynthesis via DAP pathway; L-lysine from DL-2,6-diaminopimelate: step 1/1.</text>
</comment>
<comment type="subunit">
    <text evidence="1 3">Homodimer.</text>
</comment>
<comment type="similarity">
    <text evidence="1">Belongs to the Orn/Lys/Arg decarboxylase class-II family. LysA subfamily.</text>
</comment>
<proteinExistence type="evidence at protein level"/>
<protein>
    <recommendedName>
        <fullName evidence="1">Diaminopimelate decarboxylase</fullName>
        <shortName evidence="1">DAP decarboxylase</shortName>
        <shortName evidence="1">DAPDC</shortName>
        <ecNumber evidence="1">4.1.1.20</ecNumber>
    </recommendedName>
</protein>
<reference key="1">
    <citation type="journal article" date="1999" name="Nature">
        <title>Evidence for lateral gene transfer between Archaea and Bacteria from genome sequence of Thermotoga maritima.</title>
        <authorList>
            <person name="Nelson K.E."/>
            <person name="Clayton R.A."/>
            <person name="Gill S.R."/>
            <person name="Gwinn M.L."/>
            <person name="Dodson R.J."/>
            <person name="Haft D.H."/>
            <person name="Hickey E.K."/>
            <person name="Peterson J.D."/>
            <person name="Nelson W.C."/>
            <person name="Ketchum K.A."/>
            <person name="McDonald L.A."/>
            <person name="Utterback T.R."/>
            <person name="Malek J.A."/>
            <person name="Linher K.D."/>
            <person name="Garrett M.M."/>
            <person name="Stewart A.M."/>
            <person name="Cotton M.D."/>
            <person name="Pratt M.S."/>
            <person name="Phillips C.A."/>
            <person name="Richardson D.L."/>
            <person name="Heidelberg J.F."/>
            <person name="Sutton G.G."/>
            <person name="Fleischmann R.D."/>
            <person name="Eisen J.A."/>
            <person name="White O."/>
            <person name="Salzberg S.L."/>
            <person name="Smith H.O."/>
            <person name="Venter J.C."/>
            <person name="Fraser C.M."/>
        </authorList>
    </citation>
    <scope>NUCLEOTIDE SEQUENCE [LARGE SCALE GENOMIC DNA]</scope>
    <source>
        <strain>ATCC 43589 / DSM 3109 / JCM 10099 / NBRC 100826 / MSB8</strain>
    </source>
</reference>
<reference key="2">
    <citation type="submission" date="2009-02" db="PDB data bank">
        <title>Crystal structure analysis of diaminopimelate decarboxylate (LysA).</title>
        <authorList>
            <consortium name="RIKEN structural genomics initiative (RSGI)"/>
        </authorList>
    </citation>
    <scope>X-RAY CRYSTALLOGRAPHY (1.7 ANGSTROMS) IN COMPLEX WITH PLP</scope>
    <scope>COFACTOR</scope>
    <scope>SUBUNIT</scope>
</reference>
<accession>Q9X1K5</accession>
<keyword id="KW-0002">3D-structure</keyword>
<keyword id="KW-0028">Amino-acid biosynthesis</keyword>
<keyword id="KW-0210">Decarboxylase</keyword>
<keyword id="KW-0456">Lyase</keyword>
<keyword id="KW-0457">Lysine biosynthesis</keyword>
<keyword id="KW-0663">Pyridoxal phosphate</keyword>
<keyword id="KW-1185">Reference proteome</keyword>
<gene>
    <name evidence="1" type="primary">lysA</name>
    <name type="ordered locus">TM_1517</name>
</gene>
<feature type="chain" id="PRO_0000149937" description="Diaminopimelate decarboxylase">
    <location>
        <begin position="1"/>
        <end position="386"/>
    </location>
</feature>
<feature type="active site" description="Proton donor" evidence="1">
    <location>
        <position position="314"/>
    </location>
</feature>
<feature type="binding site" evidence="1 2">
    <location>
        <position position="214"/>
    </location>
    <ligand>
        <name>pyridoxal 5'-phosphate</name>
        <dbReference type="ChEBI" id="CHEBI:597326"/>
    </ligand>
</feature>
<feature type="binding site" evidence="1 2">
    <location>
        <begin position="246"/>
        <end position="249"/>
    </location>
    <ligand>
        <name>pyridoxal 5'-phosphate</name>
        <dbReference type="ChEBI" id="CHEBI:597326"/>
    </ligand>
</feature>
<feature type="binding site" evidence="1">
    <location>
        <position position="249"/>
    </location>
    <ligand>
        <name>substrate</name>
    </ligand>
</feature>
<feature type="binding site" evidence="1">
    <location>
        <position position="285"/>
    </location>
    <ligand>
        <name>substrate</name>
    </ligand>
</feature>
<feature type="binding site" evidence="1">
    <location>
        <position position="289"/>
    </location>
    <ligand>
        <name>substrate</name>
    </ligand>
</feature>
<feature type="binding site" evidence="1">
    <location>
        <position position="315"/>
    </location>
    <ligand>
        <name>substrate</name>
    </ligand>
</feature>
<feature type="binding site" evidence="1 2">
    <location>
        <position position="343"/>
    </location>
    <ligand>
        <name>pyridoxal 5'-phosphate</name>
        <dbReference type="ChEBI" id="CHEBI:597326"/>
    </ligand>
</feature>
<feature type="binding site" evidence="1">
    <location>
        <position position="343"/>
    </location>
    <ligand>
        <name>substrate</name>
    </ligand>
</feature>
<feature type="modified residue" description="N6-(pyridoxal phosphate)lysine" evidence="1">
    <location>
        <position position="46"/>
    </location>
</feature>
<feature type="helix" evidence="4">
    <location>
        <begin position="3"/>
        <end position="11"/>
    </location>
</feature>
<feature type="strand" evidence="4">
    <location>
        <begin position="13"/>
        <end position="19"/>
    </location>
</feature>
<feature type="helix" evidence="4">
    <location>
        <begin position="20"/>
        <end position="33"/>
    </location>
</feature>
<feature type="turn" evidence="4">
    <location>
        <begin position="34"/>
        <end position="36"/>
    </location>
</feature>
<feature type="strand" evidence="4">
    <location>
        <begin position="39"/>
        <end position="44"/>
    </location>
</feature>
<feature type="helix" evidence="4">
    <location>
        <begin position="45"/>
        <end position="47"/>
    </location>
</feature>
<feature type="helix" evidence="4">
    <location>
        <begin position="51"/>
        <end position="59"/>
    </location>
</feature>
<feature type="strand" evidence="4">
    <location>
        <begin position="63"/>
        <end position="66"/>
    </location>
</feature>
<feature type="helix" evidence="4">
    <location>
        <begin position="69"/>
        <end position="77"/>
    </location>
</feature>
<feature type="helix" evidence="4">
    <location>
        <begin position="82"/>
        <end position="84"/>
    </location>
</feature>
<feature type="strand" evidence="4">
    <location>
        <begin position="85"/>
        <end position="87"/>
    </location>
</feature>
<feature type="helix" evidence="4">
    <location>
        <begin position="94"/>
        <end position="102"/>
    </location>
</feature>
<feature type="strand" evidence="4">
    <location>
        <begin position="107"/>
        <end position="110"/>
    </location>
</feature>
<feature type="helix" evidence="4">
    <location>
        <begin position="113"/>
        <end position="122"/>
    </location>
</feature>
<feature type="strand" evidence="4">
    <location>
        <begin position="128"/>
        <end position="134"/>
    </location>
</feature>
<feature type="turn" evidence="4">
    <location>
        <begin position="139"/>
        <end position="141"/>
    </location>
</feature>
<feature type="helix" evidence="4">
    <location>
        <begin position="143"/>
        <end position="151"/>
    </location>
</feature>
<feature type="strand" evidence="4">
    <location>
        <begin position="152"/>
        <end position="157"/>
    </location>
</feature>
<feature type="helix" evidence="4">
    <location>
        <begin position="158"/>
        <end position="160"/>
    </location>
</feature>
<feature type="helix" evidence="4">
    <location>
        <begin position="161"/>
        <end position="168"/>
    </location>
</feature>
<feature type="strand" evidence="4">
    <location>
        <begin position="173"/>
        <end position="177"/>
    </location>
</feature>
<feature type="strand" evidence="4">
    <location>
        <begin position="182"/>
        <end position="184"/>
    </location>
</feature>
<feature type="helix" evidence="4">
    <location>
        <begin position="188"/>
        <end position="204"/>
    </location>
</feature>
<feature type="strand" evidence="4">
    <location>
        <begin position="207"/>
        <end position="210"/>
    </location>
</feature>
<feature type="strand" evidence="4">
    <location>
        <begin position="219"/>
        <end position="221"/>
    </location>
</feature>
<feature type="helix" evidence="4">
    <location>
        <begin position="226"/>
        <end position="232"/>
    </location>
</feature>
<feature type="helix" evidence="4">
    <location>
        <begin position="234"/>
        <end position="237"/>
    </location>
</feature>
<feature type="strand" evidence="4">
    <location>
        <begin position="241"/>
        <end position="247"/>
    </location>
</feature>
<feature type="helix" evidence="4">
    <location>
        <begin position="249"/>
        <end position="252"/>
    </location>
</feature>
<feature type="helix" evidence="4">
    <location>
        <begin position="253"/>
        <end position="255"/>
    </location>
</feature>
<feature type="strand" evidence="4">
    <location>
        <begin position="256"/>
        <end position="268"/>
    </location>
</feature>
<feature type="strand" evidence="4">
    <location>
        <begin position="271"/>
        <end position="277"/>
    </location>
</feature>
<feature type="turn" evidence="4">
    <location>
        <begin position="280"/>
        <end position="282"/>
    </location>
</feature>
<feature type="helix" evidence="4">
    <location>
        <begin position="285"/>
        <end position="288"/>
    </location>
</feature>
<feature type="strand" evidence="4">
    <location>
        <begin position="295"/>
        <end position="297"/>
    </location>
</feature>
<feature type="strand" evidence="4">
    <location>
        <begin position="304"/>
        <end position="310"/>
    </location>
</feature>
<feature type="strand" evidence="4">
    <location>
        <begin position="312"/>
        <end position="315"/>
    </location>
</feature>
<feature type="strand" evidence="4">
    <location>
        <begin position="319"/>
        <end position="327"/>
    </location>
</feature>
<feature type="strand" evidence="4">
    <location>
        <begin position="334"/>
        <end position="339"/>
    </location>
</feature>
<feature type="strand" evidence="4">
    <location>
        <begin position="341"/>
        <end position="344"/>
    </location>
</feature>
<feature type="helix" evidence="4">
    <location>
        <begin position="345"/>
        <end position="347"/>
    </location>
</feature>
<feature type="turn" evidence="4">
    <location>
        <begin position="351"/>
        <end position="353"/>
    </location>
</feature>
<feature type="strand" evidence="4">
    <location>
        <begin position="358"/>
        <end position="362"/>
    </location>
</feature>
<feature type="strand" evidence="4">
    <location>
        <begin position="368"/>
        <end position="372"/>
    </location>
</feature>
<feature type="helix" evidence="4">
    <location>
        <begin position="377"/>
        <end position="380"/>
    </location>
</feature>
<feature type="turn" evidence="4">
    <location>
        <begin position="381"/>
        <end position="383"/>
    </location>
</feature>
<dbReference type="EC" id="4.1.1.20" evidence="1"/>
<dbReference type="EMBL" id="AE000512">
    <property type="protein sequence ID" value="AAD36584.1"/>
    <property type="molecule type" value="Genomic_DNA"/>
</dbReference>
<dbReference type="PIR" id="F72245">
    <property type="entry name" value="F72245"/>
</dbReference>
<dbReference type="RefSeq" id="NP_229317.1">
    <property type="nucleotide sequence ID" value="NC_000853.1"/>
</dbReference>
<dbReference type="RefSeq" id="WP_004081870.1">
    <property type="nucleotide sequence ID" value="NC_000853.1"/>
</dbReference>
<dbReference type="PDB" id="2YXX">
    <property type="method" value="X-ray"/>
    <property type="resolution" value="1.70 A"/>
    <property type="chains" value="A=1-386"/>
</dbReference>
<dbReference type="PDBsum" id="2YXX"/>
<dbReference type="SMR" id="Q9X1K5"/>
<dbReference type="FunCoup" id="Q9X1K5">
    <property type="interactions" value="292"/>
</dbReference>
<dbReference type="STRING" id="243274.TM_1517"/>
<dbReference type="PaxDb" id="243274-THEMA_06715"/>
<dbReference type="EnsemblBacteria" id="AAD36584">
    <property type="protein sequence ID" value="AAD36584"/>
    <property type="gene ID" value="TM_1517"/>
</dbReference>
<dbReference type="KEGG" id="tma:TM1517"/>
<dbReference type="KEGG" id="tmi:THEMA_06715"/>
<dbReference type="KEGG" id="tmm:Tmari_1525"/>
<dbReference type="KEGG" id="tmw:THMA_1549"/>
<dbReference type="eggNOG" id="COG0019">
    <property type="taxonomic scope" value="Bacteria"/>
</dbReference>
<dbReference type="InParanoid" id="Q9X1K5"/>
<dbReference type="OrthoDB" id="9802241at2"/>
<dbReference type="UniPathway" id="UPA00034">
    <property type="reaction ID" value="UER00027"/>
</dbReference>
<dbReference type="EvolutionaryTrace" id="Q9X1K5"/>
<dbReference type="Proteomes" id="UP000008183">
    <property type="component" value="Chromosome"/>
</dbReference>
<dbReference type="GO" id="GO:0008836">
    <property type="term" value="F:diaminopimelate decarboxylase activity"/>
    <property type="evidence" value="ECO:0000318"/>
    <property type="project" value="GO_Central"/>
</dbReference>
<dbReference type="GO" id="GO:0030170">
    <property type="term" value="F:pyridoxal phosphate binding"/>
    <property type="evidence" value="ECO:0007669"/>
    <property type="project" value="UniProtKB-UniRule"/>
</dbReference>
<dbReference type="GO" id="GO:0009089">
    <property type="term" value="P:lysine biosynthetic process via diaminopimelate"/>
    <property type="evidence" value="ECO:0000318"/>
    <property type="project" value="GO_Central"/>
</dbReference>
<dbReference type="CDD" id="cd06828">
    <property type="entry name" value="PLPDE_III_DapDC"/>
    <property type="match status" value="1"/>
</dbReference>
<dbReference type="FunFam" id="3.20.20.10:FF:000003">
    <property type="entry name" value="Diaminopimelate decarboxylase"/>
    <property type="match status" value="1"/>
</dbReference>
<dbReference type="Gene3D" id="3.20.20.10">
    <property type="entry name" value="Alanine racemase"/>
    <property type="match status" value="1"/>
</dbReference>
<dbReference type="Gene3D" id="2.40.37.10">
    <property type="entry name" value="Lyase, Ornithine Decarboxylase, Chain A, domain 1"/>
    <property type="match status" value="1"/>
</dbReference>
<dbReference type="HAMAP" id="MF_02120">
    <property type="entry name" value="LysA"/>
    <property type="match status" value="1"/>
</dbReference>
<dbReference type="InterPro" id="IPR009006">
    <property type="entry name" value="Ala_racemase/Decarboxylase_C"/>
</dbReference>
<dbReference type="InterPro" id="IPR002986">
    <property type="entry name" value="DAP_deCOOHase_LysA"/>
</dbReference>
<dbReference type="InterPro" id="IPR022643">
    <property type="entry name" value="De-COase2_C"/>
</dbReference>
<dbReference type="InterPro" id="IPR022644">
    <property type="entry name" value="De-COase2_N"/>
</dbReference>
<dbReference type="InterPro" id="IPR022653">
    <property type="entry name" value="De-COase2_pyr-phos_BS"/>
</dbReference>
<dbReference type="InterPro" id="IPR000183">
    <property type="entry name" value="Orn/DAP/Arg_de-COase"/>
</dbReference>
<dbReference type="InterPro" id="IPR029066">
    <property type="entry name" value="PLP-binding_barrel"/>
</dbReference>
<dbReference type="NCBIfam" id="TIGR01048">
    <property type="entry name" value="lysA"/>
    <property type="match status" value="1"/>
</dbReference>
<dbReference type="PANTHER" id="PTHR43727">
    <property type="entry name" value="DIAMINOPIMELATE DECARBOXYLASE"/>
    <property type="match status" value="1"/>
</dbReference>
<dbReference type="PANTHER" id="PTHR43727:SF2">
    <property type="entry name" value="GROUP IV DECARBOXYLASE"/>
    <property type="match status" value="1"/>
</dbReference>
<dbReference type="Pfam" id="PF02784">
    <property type="entry name" value="Orn_Arg_deC_N"/>
    <property type="match status" value="1"/>
</dbReference>
<dbReference type="Pfam" id="PF00278">
    <property type="entry name" value="Orn_DAP_Arg_deC"/>
    <property type="match status" value="1"/>
</dbReference>
<dbReference type="PRINTS" id="PR01181">
    <property type="entry name" value="DAPDCRBXLASE"/>
</dbReference>
<dbReference type="PRINTS" id="PR01179">
    <property type="entry name" value="ODADCRBXLASE"/>
</dbReference>
<dbReference type="SUPFAM" id="SSF50621">
    <property type="entry name" value="Alanine racemase C-terminal domain-like"/>
    <property type="match status" value="1"/>
</dbReference>
<dbReference type="SUPFAM" id="SSF51419">
    <property type="entry name" value="PLP-binding barrel"/>
    <property type="match status" value="1"/>
</dbReference>
<dbReference type="PROSITE" id="PS00878">
    <property type="entry name" value="ODR_DC_2_1"/>
    <property type="match status" value="1"/>
</dbReference>